<keyword id="KW-1003">Cell membrane</keyword>
<keyword id="KW-0472">Membrane</keyword>
<keyword id="KW-0812">Transmembrane</keyword>
<keyword id="KW-1133">Transmembrane helix</keyword>
<keyword id="KW-0813">Transport</keyword>
<proteinExistence type="inferred from homology"/>
<gene>
    <name type="primary">hrtB</name>
    <name type="ordered locus">NWMN_2262</name>
</gene>
<organism>
    <name type="scientific">Staphylococcus aureus (strain Newman)</name>
    <dbReference type="NCBI Taxonomy" id="426430"/>
    <lineage>
        <taxon>Bacteria</taxon>
        <taxon>Bacillati</taxon>
        <taxon>Bacillota</taxon>
        <taxon>Bacilli</taxon>
        <taxon>Bacillales</taxon>
        <taxon>Staphylococcaceae</taxon>
        <taxon>Staphylococcus</taxon>
    </lineage>
</organism>
<sequence>MKLAIKEIMFYKFRYILITLIILLLSIMVLFISGLAQGLGRENISLFEHFDNDEYVVQKMKEPQIEKSQLSDTQQNQIKKVIHQEPYKMNIQTLKLSNKEQDVITMNDVKQQRIQLKKGDYPKNAHEVAINDKLAADNIRVGDRLHFKNNSTSYRVSGILNDTMYAHSSIVLLNDNGFNALNKVNTAFYPVKNLTQQQRDELNKINDVQVVSEKDLTGNIASYQAEQAPLNMMIVSLFAITAIVLSAFFYVMTIQKISQIGILKAIGIKTRHLLSALVLQILTLTIIGVGIAVIIIVGLSFMMPVTMPFYLTTQNILLMVGIFILVAILGASLSFIKLFKVDPIEAIGGAE</sequence>
<comment type="function">
    <text evidence="3">Part of the ABC transporter complex hrt involved in hemin import. Responsible for the translocation of the substrate across the membrane (Probable).</text>
</comment>
<comment type="subunit">
    <text evidence="2">The complex is composed of two ATP-binding proteins (HrtA), two transmembrane proteins (HrtB) and a solute-binding protein.</text>
</comment>
<comment type="subcellular location">
    <subcellularLocation>
        <location evidence="2">Cell membrane</location>
        <topology evidence="2">Multi-pass membrane protein</topology>
    </subcellularLocation>
</comment>
<comment type="similarity">
    <text evidence="2">Belongs to the ABC-4 integral membrane protein family. HrtB subfamily.</text>
</comment>
<protein>
    <recommendedName>
        <fullName>Putative hemin transport system permease protein HrtB</fullName>
    </recommendedName>
</protein>
<accession>A6QJK2</accession>
<reference key="1">
    <citation type="journal article" date="2008" name="J. Bacteriol.">
        <title>Genome sequence of Staphylococcus aureus strain Newman and comparative analysis of staphylococcal genomes: polymorphism and evolution of two major pathogenicity islands.</title>
        <authorList>
            <person name="Baba T."/>
            <person name="Bae T."/>
            <person name="Schneewind O."/>
            <person name="Takeuchi F."/>
            <person name="Hiramatsu K."/>
        </authorList>
    </citation>
    <scope>NUCLEOTIDE SEQUENCE [LARGE SCALE GENOMIC DNA]</scope>
    <source>
        <strain>Newman</strain>
    </source>
</reference>
<reference key="2">
    <citation type="journal article" date="2006" name="PLoS Pathog.">
        <title>Staphylococcus aureus redirects central metabolism to increase iron availability.</title>
        <authorList>
            <person name="Friedman D.B."/>
            <person name="Stauff D.L."/>
            <person name="Pishchany G."/>
            <person name="Whitwell C.W."/>
            <person name="Torres V.J."/>
            <person name="Skaar E.P."/>
        </authorList>
    </citation>
    <scope>FUNCTION</scope>
</reference>
<feature type="chain" id="PRO_0000317045" description="Putative hemin transport system permease protein HrtB">
    <location>
        <begin position="1"/>
        <end position="351"/>
    </location>
</feature>
<feature type="transmembrane region" description="Helical" evidence="1">
    <location>
        <begin position="234"/>
        <end position="254"/>
    </location>
</feature>
<feature type="transmembrane region" description="Helical" evidence="1">
    <location>
        <begin position="281"/>
        <end position="301"/>
    </location>
</feature>
<feature type="transmembrane region" description="Helical" evidence="1">
    <location>
        <begin position="316"/>
        <end position="336"/>
    </location>
</feature>
<dbReference type="EMBL" id="AP009351">
    <property type="protein sequence ID" value="BAF68534.1"/>
    <property type="molecule type" value="Genomic_DNA"/>
</dbReference>
<dbReference type="RefSeq" id="WP_000761395.1">
    <property type="nucleotide sequence ID" value="NZ_JBBIAE010000004.1"/>
</dbReference>
<dbReference type="SMR" id="A6QJK2"/>
<dbReference type="KEGG" id="sae:NWMN_2262"/>
<dbReference type="HOGENOM" id="CLU_060907_1_0_9"/>
<dbReference type="Proteomes" id="UP000006386">
    <property type="component" value="Chromosome"/>
</dbReference>
<dbReference type="GO" id="GO:0005886">
    <property type="term" value="C:plasma membrane"/>
    <property type="evidence" value="ECO:0007669"/>
    <property type="project" value="UniProtKB-SubCell"/>
</dbReference>
<dbReference type="InterPro" id="IPR051125">
    <property type="entry name" value="ABC-4/HrtB_transporter"/>
</dbReference>
<dbReference type="InterPro" id="IPR003838">
    <property type="entry name" value="ABC3_permease_C"/>
</dbReference>
<dbReference type="PANTHER" id="PTHR43738">
    <property type="entry name" value="ABC TRANSPORTER, MEMBRANE PROTEIN"/>
    <property type="match status" value="1"/>
</dbReference>
<dbReference type="PANTHER" id="PTHR43738:SF1">
    <property type="entry name" value="HEMIN TRANSPORT SYSTEM PERMEASE PROTEIN HRTB-RELATED"/>
    <property type="match status" value="1"/>
</dbReference>
<dbReference type="Pfam" id="PF02687">
    <property type="entry name" value="FtsX"/>
    <property type="match status" value="1"/>
</dbReference>
<evidence type="ECO:0000255" key="1"/>
<evidence type="ECO:0000305" key="2"/>
<evidence type="ECO:0000305" key="3">
    <source>
    </source>
</evidence>
<name>HRTB_STAAE</name>